<organism>
    <name type="scientific">Vibrio cholerae serotype O1 (strain ATCC 39315 / El Tor Inaba N16961)</name>
    <dbReference type="NCBI Taxonomy" id="243277"/>
    <lineage>
        <taxon>Bacteria</taxon>
        <taxon>Pseudomonadati</taxon>
        <taxon>Pseudomonadota</taxon>
        <taxon>Gammaproteobacteria</taxon>
        <taxon>Vibrionales</taxon>
        <taxon>Vibrionaceae</taxon>
        <taxon>Vibrio</taxon>
    </lineage>
</organism>
<keyword id="KW-0997">Cell inner membrane</keyword>
<keyword id="KW-1003">Cell membrane</keyword>
<keyword id="KW-0963">Cytoplasm</keyword>
<keyword id="KW-0342">GTP-binding</keyword>
<keyword id="KW-0472">Membrane</keyword>
<keyword id="KW-0547">Nucleotide-binding</keyword>
<keyword id="KW-1185">Reference proteome</keyword>
<keyword id="KW-0690">Ribosome biogenesis</keyword>
<keyword id="KW-0694">RNA-binding</keyword>
<keyword id="KW-0699">rRNA-binding</keyword>
<comment type="function">
    <text evidence="1">An essential GTPase that binds both GDP and GTP, with rapid nucleotide exchange. Plays a role in 16S rRNA processing and 30S ribosomal subunit biogenesis and possibly also in cell cycle regulation and energy metabolism.</text>
</comment>
<comment type="subunit">
    <text evidence="1">Monomer.</text>
</comment>
<comment type="subcellular location">
    <subcellularLocation>
        <location>Cytoplasm</location>
    </subcellularLocation>
    <subcellularLocation>
        <location evidence="1">Cell inner membrane</location>
        <topology evidence="1">Peripheral membrane protein</topology>
    </subcellularLocation>
</comment>
<comment type="similarity">
    <text evidence="1 2">Belongs to the TRAFAC class TrmE-Era-EngA-EngB-Septin-like GTPase superfamily. Era GTPase family.</text>
</comment>
<protein>
    <recommendedName>
        <fullName evidence="1">GTPase Era</fullName>
    </recommendedName>
</protein>
<gene>
    <name evidence="1" type="primary">era</name>
    <name type="ordered locus">VC_2460</name>
</gene>
<feature type="chain" id="PRO_0000180070" description="GTPase Era">
    <location>
        <begin position="1"/>
        <end position="325"/>
    </location>
</feature>
<feature type="domain" description="Era-type G" evidence="2">
    <location>
        <begin position="30"/>
        <end position="198"/>
    </location>
</feature>
<feature type="domain" description="KH type-2" evidence="1">
    <location>
        <begin position="221"/>
        <end position="307"/>
    </location>
</feature>
<feature type="region of interest" description="G1" evidence="2">
    <location>
        <begin position="38"/>
        <end position="45"/>
    </location>
</feature>
<feature type="region of interest" description="G2" evidence="2">
    <location>
        <begin position="64"/>
        <end position="68"/>
    </location>
</feature>
<feature type="region of interest" description="G3" evidence="2">
    <location>
        <begin position="85"/>
        <end position="88"/>
    </location>
</feature>
<feature type="region of interest" description="G4" evidence="2">
    <location>
        <begin position="147"/>
        <end position="150"/>
    </location>
</feature>
<feature type="region of interest" description="G5" evidence="2">
    <location>
        <begin position="177"/>
        <end position="179"/>
    </location>
</feature>
<feature type="binding site" evidence="1">
    <location>
        <begin position="38"/>
        <end position="45"/>
    </location>
    <ligand>
        <name>GTP</name>
        <dbReference type="ChEBI" id="CHEBI:37565"/>
    </ligand>
</feature>
<feature type="binding site" evidence="1">
    <location>
        <begin position="85"/>
        <end position="89"/>
    </location>
    <ligand>
        <name>GTP</name>
        <dbReference type="ChEBI" id="CHEBI:37565"/>
    </ligand>
</feature>
<feature type="binding site" evidence="1">
    <location>
        <begin position="147"/>
        <end position="150"/>
    </location>
    <ligand>
        <name>GTP</name>
        <dbReference type="ChEBI" id="CHEBI:37565"/>
    </ligand>
</feature>
<evidence type="ECO:0000255" key="1">
    <source>
        <dbReference type="HAMAP-Rule" id="MF_00367"/>
    </source>
</evidence>
<evidence type="ECO:0000255" key="2">
    <source>
        <dbReference type="PROSITE-ProRule" id="PRU01050"/>
    </source>
</evidence>
<proteinExistence type="inferred from homology"/>
<dbReference type="EMBL" id="AE003852">
    <property type="protein sequence ID" value="AAF95602.1"/>
    <property type="molecule type" value="Genomic_DNA"/>
</dbReference>
<dbReference type="PIR" id="A82073">
    <property type="entry name" value="A82073"/>
</dbReference>
<dbReference type="RefSeq" id="NP_232089.1">
    <property type="nucleotide sequence ID" value="NC_002505.1"/>
</dbReference>
<dbReference type="RefSeq" id="WP_000774933.1">
    <property type="nucleotide sequence ID" value="NZ_LT906614.1"/>
</dbReference>
<dbReference type="SMR" id="Q9KPB3"/>
<dbReference type="STRING" id="243277.VC_2460"/>
<dbReference type="DNASU" id="2613002"/>
<dbReference type="EnsemblBacteria" id="AAF95602">
    <property type="protein sequence ID" value="AAF95602"/>
    <property type="gene ID" value="VC_2460"/>
</dbReference>
<dbReference type="KEGG" id="vch:VC_2460"/>
<dbReference type="PATRIC" id="fig|243277.26.peg.2345"/>
<dbReference type="eggNOG" id="COG1159">
    <property type="taxonomic scope" value="Bacteria"/>
</dbReference>
<dbReference type="HOGENOM" id="CLU_038009_1_2_6"/>
<dbReference type="Proteomes" id="UP000000584">
    <property type="component" value="Chromosome 1"/>
</dbReference>
<dbReference type="GO" id="GO:0005829">
    <property type="term" value="C:cytosol"/>
    <property type="evidence" value="ECO:0000318"/>
    <property type="project" value="GO_Central"/>
</dbReference>
<dbReference type="GO" id="GO:0005886">
    <property type="term" value="C:plasma membrane"/>
    <property type="evidence" value="ECO:0007669"/>
    <property type="project" value="UniProtKB-SubCell"/>
</dbReference>
<dbReference type="GO" id="GO:0005525">
    <property type="term" value="F:GTP binding"/>
    <property type="evidence" value="ECO:0007669"/>
    <property type="project" value="UniProtKB-UniRule"/>
</dbReference>
<dbReference type="GO" id="GO:0003924">
    <property type="term" value="F:GTPase activity"/>
    <property type="evidence" value="ECO:0007669"/>
    <property type="project" value="UniProtKB-UniRule"/>
</dbReference>
<dbReference type="GO" id="GO:0043024">
    <property type="term" value="F:ribosomal small subunit binding"/>
    <property type="evidence" value="ECO:0000318"/>
    <property type="project" value="GO_Central"/>
</dbReference>
<dbReference type="GO" id="GO:0019843">
    <property type="term" value="F:rRNA binding"/>
    <property type="evidence" value="ECO:0000318"/>
    <property type="project" value="GO_Central"/>
</dbReference>
<dbReference type="GO" id="GO:0070181">
    <property type="term" value="F:small ribosomal subunit rRNA binding"/>
    <property type="evidence" value="ECO:0007669"/>
    <property type="project" value="UniProtKB-UniRule"/>
</dbReference>
<dbReference type="GO" id="GO:0000028">
    <property type="term" value="P:ribosomal small subunit assembly"/>
    <property type="evidence" value="ECO:0000318"/>
    <property type="project" value="GO_Central"/>
</dbReference>
<dbReference type="CDD" id="cd04163">
    <property type="entry name" value="Era"/>
    <property type="match status" value="1"/>
</dbReference>
<dbReference type="CDD" id="cd22534">
    <property type="entry name" value="KH-II_Era"/>
    <property type="match status" value="1"/>
</dbReference>
<dbReference type="FunFam" id="3.30.300.20:FF:000003">
    <property type="entry name" value="GTPase Era"/>
    <property type="match status" value="1"/>
</dbReference>
<dbReference type="FunFam" id="3.40.50.300:FF:000094">
    <property type="entry name" value="GTPase Era"/>
    <property type="match status" value="1"/>
</dbReference>
<dbReference type="Gene3D" id="3.30.300.20">
    <property type="match status" value="1"/>
</dbReference>
<dbReference type="Gene3D" id="3.40.50.300">
    <property type="entry name" value="P-loop containing nucleotide triphosphate hydrolases"/>
    <property type="match status" value="1"/>
</dbReference>
<dbReference type="HAMAP" id="MF_00367">
    <property type="entry name" value="GTPase_Era"/>
    <property type="match status" value="1"/>
</dbReference>
<dbReference type="InterPro" id="IPR030388">
    <property type="entry name" value="G_ERA_dom"/>
</dbReference>
<dbReference type="InterPro" id="IPR006073">
    <property type="entry name" value="GTP-bd"/>
</dbReference>
<dbReference type="InterPro" id="IPR005662">
    <property type="entry name" value="GTPase_Era-like"/>
</dbReference>
<dbReference type="InterPro" id="IPR015946">
    <property type="entry name" value="KH_dom-like_a/b"/>
</dbReference>
<dbReference type="InterPro" id="IPR004044">
    <property type="entry name" value="KH_dom_type_2"/>
</dbReference>
<dbReference type="InterPro" id="IPR009019">
    <property type="entry name" value="KH_sf_prok-type"/>
</dbReference>
<dbReference type="InterPro" id="IPR027417">
    <property type="entry name" value="P-loop_NTPase"/>
</dbReference>
<dbReference type="InterPro" id="IPR005225">
    <property type="entry name" value="Small_GTP-bd"/>
</dbReference>
<dbReference type="NCBIfam" id="TIGR00436">
    <property type="entry name" value="era"/>
    <property type="match status" value="1"/>
</dbReference>
<dbReference type="NCBIfam" id="NF000908">
    <property type="entry name" value="PRK00089.1"/>
    <property type="match status" value="1"/>
</dbReference>
<dbReference type="NCBIfam" id="TIGR00231">
    <property type="entry name" value="small_GTP"/>
    <property type="match status" value="1"/>
</dbReference>
<dbReference type="PANTHER" id="PTHR42698">
    <property type="entry name" value="GTPASE ERA"/>
    <property type="match status" value="1"/>
</dbReference>
<dbReference type="PANTHER" id="PTHR42698:SF1">
    <property type="entry name" value="GTPASE ERA, MITOCHONDRIAL"/>
    <property type="match status" value="1"/>
</dbReference>
<dbReference type="Pfam" id="PF07650">
    <property type="entry name" value="KH_2"/>
    <property type="match status" value="1"/>
</dbReference>
<dbReference type="Pfam" id="PF01926">
    <property type="entry name" value="MMR_HSR1"/>
    <property type="match status" value="1"/>
</dbReference>
<dbReference type="SUPFAM" id="SSF52540">
    <property type="entry name" value="P-loop containing nucleoside triphosphate hydrolases"/>
    <property type="match status" value="1"/>
</dbReference>
<dbReference type="SUPFAM" id="SSF54814">
    <property type="entry name" value="Prokaryotic type KH domain (KH-domain type II)"/>
    <property type="match status" value="1"/>
</dbReference>
<dbReference type="PROSITE" id="PS51713">
    <property type="entry name" value="G_ERA"/>
    <property type="match status" value="1"/>
</dbReference>
<dbReference type="PROSITE" id="PS50823">
    <property type="entry name" value="KH_TYPE_2"/>
    <property type="match status" value="1"/>
</dbReference>
<sequence length="325" mass="37066">MADQEFDIDAYFASQSEGKSVVASTPENQHCGFVAIVGRPNVGKSTLLNNLLGQKISITSRKPQTTRHRIMGVETDGNYQAIYVDTPGLHIEEKRAINRLMNRAASSSLSDVNLVLFVVEGTHWTADDEMVFTKLQKANFPVVLCVNKVDQVKDRNEVMLHMLELSKRMQFVDIVPISAKQGKNTDVLKKHVRDHLPKAVHHFPEEYVTDRSQRFMASEIVREKLMRFTGEELPYSVTVEIERFDYNPDTDGFHINALILVERIGQKKMVIGKNGEKIKTIGREARLDMEELFGRKVYLETWVKVKSGWADDERALRSLGYIDDL</sequence>
<accession>Q9KPB3</accession>
<name>ERA_VIBCH</name>
<reference key="1">
    <citation type="journal article" date="2000" name="Nature">
        <title>DNA sequence of both chromosomes of the cholera pathogen Vibrio cholerae.</title>
        <authorList>
            <person name="Heidelberg J.F."/>
            <person name="Eisen J.A."/>
            <person name="Nelson W.C."/>
            <person name="Clayton R.A."/>
            <person name="Gwinn M.L."/>
            <person name="Dodson R.J."/>
            <person name="Haft D.H."/>
            <person name="Hickey E.K."/>
            <person name="Peterson J.D."/>
            <person name="Umayam L.A."/>
            <person name="Gill S.R."/>
            <person name="Nelson K.E."/>
            <person name="Read T.D."/>
            <person name="Tettelin H."/>
            <person name="Richardson D.L."/>
            <person name="Ermolaeva M.D."/>
            <person name="Vamathevan J.J."/>
            <person name="Bass S."/>
            <person name="Qin H."/>
            <person name="Dragoi I."/>
            <person name="Sellers P."/>
            <person name="McDonald L.A."/>
            <person name="Utterback T.R."/>
            <person name="Fleischmann R.D."/>
            <person name="Nierman W.C."/>
            <person name="White O."/>
            <person name="Salzberg S.L."/>
            <person name="Smith H.O."/>
            <person name="Colwell R.R."/>
            <person name="Mekalanos J.J."/>
            <person name="Venter J.C."/>
            <person name="Fraser C.M."/>
        </authorList>
    </citation>
    <scope>NUCLEOTIDE SEQUENCE [LARGE SCALE GENOMIC DNA]</scope>
    <source>
        <strain>ATCC 39315 / El Tor Inaba N16961</strain>
    </source>
</reference>